<reference key="1">
    <citation type="journal article" date="2005" name="Nature">
        <title>The map-based sequence of the rice genome.</title>
        <authorList>
            <consortium name="International rice genome sequencing project (IRGSP)"/>
        </authorList>
    </citation>
    <scope>NUCLEOTIDE SEQUENCE [LARGE SCALE GENOMIC DNA]</scope>
    <source>
        <strain>cv. Nipponbare</strain>
    </source>
</reference>
<reference key="2">
    <citation type="journal article" date="2008" name="Nucleic Acids Res.">
        <title>The rice annotation project database (RAP-DB): 2008 update.</title>
        <authorList>
            <consortium name="The rice annotation project (RAP)"/>
        </authorList>
    </citation>
    <scope>GENOME REANNOTATION</scope>
    <source>
        <strain>cv. Nipponbare</strain>
    </source>
</reference>
<reference key="3">
    <citation type="journal article" date="2013" name="Rice">
        <title>Improvement of the Oryza sativa Nipponbare reference genome using next generation sequence and optical map data.</title>
        <authorList>
            <person name="Kawahara Y."/>
            <person name="de la Bastide M."/>
            <person name="Hamilton J.P."/>
            <person name="Kanamori H."/>
            <person name="McCombie W.R."/>
            <person name="Ouyang S."/>
            <person name="Schwartz D.C."/>
            <person name="Tanaka T."/>
            <person name="Wu J."/>
            <person name="Zhou S."/>
            <person name="Childs K.L."/>
            <person name="Davidson R.M."/>
            <person name="Lin H."/>
            <person name="Quesada-Ocampo L."/>
            <person name="Vaillancourt B."/>
            <person name="Sakai H."/>
            <person name="Lee S.S."/>
            <person name="Kim J."/>
            <person name="Numa H."/>
            <person name="Itoh T."/>
            <person name="Buell C.R."/>
            <person name="Matsumoto T."/>
        </authorList>
    </citation>
    <scope>GENOME REANNOTATION</scope>
    <source>
        <strain>cv. Nipponbare</strain>
    </source>
</reference>
<reference key="4">
    <citation type="journal article" date="2005" name="PLoS Biol.">
        <title>The genomes of Oryza sativa: a history of duplications.</title>
        <authorList>
            <person name="Yu J."/>
            <person name="Wang J."/>
            <person name="Lin W."/>
            <person name="Li S."/>
            <person name="Li H."/>
            <person name="Zhou J."/>
            <person name="Ni P."/>
            <person name="Dong W."/>
            <person name="Hu S."/>
            <person name="Zeng C."/>
            <person name="Zhang J."/>
            <person name="Zhang Y."/>
            <person name="Li R."/>
            <person name="Xu Z."/>
            <person name="Li S."/>
            <person name="Li X."/>
            <person name="Zheng H."/>
            <person name="Cong L."/>
            <person name="Lin L."/>
            <person name="Yin J."/>
            <person name="Geng J."/>
            <person name="Li G."/>
            <person name="Shi J."/>
            <person name="Liu J."/>
            <person name="Lv H."/>
            <person name="Li J."/>
            <person name="Wang J."/>
            <person name="Deng Y."/>
            <person name="Ran L."/>
            <person name="Shi X."/>
            <person name="Wang X."/>
            <person name="Wu Q."/>
            <person name="Li C."/>
            <person name="Ren X."/>
            <person name="Wang J."/>
            <person name="Wang X."/>
            <person name="Li D."/>
            <person name="Liu D."/>
            <person name="Zhang X."/>
            <person name="Ji Z."/>
            <person name="Zhao W."/>
            <person name="Sun Y."/>
            <person name="Zhang Z."/>
            <person name="Bao J."/>
            <person name="Han Y."/>
            <person name="Dong L."/>
            <person name="Ji J."/>
            <person name="Chen P."/>
            <person name="Wu S."/>
            <person name="Liu J."/>
            <person name="Xiao Y."/>
            <person name="Bu D."/>
            <person name="Tan J."/>
            <person name="Yang L."/>
            <person name="Ye C."/>
            <person name="Zhang J."/>
            <person name="Xu J."/>
            <person name="Zhou Y."/>
            <person name="Yu Y."/>
            <person name="Zhang B."/>
            <person name="Zhuang S."/>
            <person name="Wei H."/>
            <person name="Liu B."/>
            <person name="Lei M."/>
            <person name="Yu H."/>
            <person name="Li Y."/>
            <person name="Xu H."/>
            <person name="Wei S."/>
            <person name="He X."/>
            <person name="Fang L."/>
            <person name="Zhang Z."/>
            <person name="Zhang Y."/>
            <person name="Huang X."/>
            <person name="Su Z."/>
            <person name="Tong W."/>
            <person name="Li J."/>
            <person name="Tong Z."/>
            <person name="Li S."/>
            <person name="Ye J."/>
            <person name="Wang L."/>
            <person name="Fang L."/>
            <person name="Lei T."/>
            <person name="Chen C.-S."/>
            <person name="Chen H.-C."/>
            <person name="Xu Z."/>
            <person name="Li H."/>
            <person name="Huang H."/>
            <person name="Zhang F."/>
            <person name="Xu H."/>
            <person name="Li N."/>
            <person name="Zhao C."/>
            <person name="Li S."/>
            <person name="Dong L."/>
            <person name="Huang Y."/>
            <person name="Li L."/>
            <person name="Xi Y."/>
            <person name="Qi Q."/>
            <person name="Li W."/>
            <person name="Zhang B."/>
            <person name="Hu W."/>
            <person name="Zhang Y."/>
            <person name="Tian X."/>
            <person name="Jiao Y."/>
            <person name="Liang X."/>
            <person name="Jin J."/>
            <person name="Gao L."/>
            <person name="Zheng W."/>
            <person name="Hao B."/>
            <person name="Liu S.-M."/>
            <person name="Wang W."/>
            <person name="Yuan L."/>
            <person name="Cao M."/>
            <person name="McDermott J."/>
            <person name="Samudrala R."/>
            <person name="Wang J."/>
            <person name="Wong G.K.-S."/>
            <person name="Yang H."/>
        </authorList>
    </citation>
    <scope>NUCLEOTIDE SEQUENCE [LARGE SCALE GENOMIC DNA]</scope>
    <source>
        <strain>cv. Nipponbare</strain>
    </source>
</reference>
<reference key="5">
    <citation type="journal article" date="2003" name="Science">
        <title>Collection, mapping, and annotation of over 28,000 cDNA clones from japonica rice.</title>
        <authorList>
            <consortium name="The rice full-length cDNA consortium"/>
        </authorList>
    </citation>
    <scope>NUCLEOTIDE SEQUENCE [LARGE SCALE MRNA] (ISOFORM 1)</scope>
    <source>
        <strain>cv. Nipponbare</strain>
    </source>
</reference>
<reference key="6">
    <citation type="journal article" date="2006" name="Mol. Genet. Genomics">
        <title>Genome-wide analysis of the stress associated protein (SAP) gene family containing A20/AN1 zinc-finger(s) in rice and their phylogenetic relationship with Arabidopsis.</title>
        <authorList>
            <person name="Vij S."/>
            <person name="Tyagi A.K."/>
        </authorList>
    </citation>
    <scope>GENE FAMILY</scope>
</reference>
<feature type="chain" id="PRO_0000084241" description="Zinc finger A20 and AN1 domain-containing stress-associated protein 1">
    <location>
        <begin position="1"/>
        <end position="164"/>
    </location>
</feature>
<feature type="zinc finger region" description="A20-type" evidence="2">
    <location>
        <begin position="16"/>
        <end position="50"/>
    </location>
</feature>
<feature type="zinc finger region" description="AN1-type" evidence="1">
    <location>
        <begin position="99"/>
        <end position="145"/>
    </location>
</feature>
<feature type="region of interest" description="Disordered" evidence="3">
    <location>
        <begin position="48"/>
        <end position="81"/>
    </location>
</feature>
<feature type="compositionally biased region" description="Low complexity" evidence="3">
    <location>
        <begin position="48"/>
        <end position="58"/>
    </location>
</feature>
<feature type="binding site" evidence="2">
    <location>
        <position position="22"/>
    </location>
    <ligand>
        <name>Zn(2+)</name>
        <dbReference type="ChEBI" id="CHEBI:29105"/>
        <label>1</label>
    </ligand>
</feature>
<feature type="binding site" evidence="2">
    <location>
        <position position="26"/>
    </location>
    <ligand>
        <name>Zn(2+)</name>
        <dbReference type="ChEBI" id="CHEBI:29105"/>
        <label>1</label>
    </ligand>
</feature>
<feature type="binding site" evidence="2">
    <location>
        <position position="38"/>
    </location>
    <ligand>
        <name>Zn(2+)</name>
        <dbReference type="ChEBI" id="CHEBI:29105"/>
        <label>1</label>
    </ligand>
</feature>
<feature type="binding site" evidence="2">
    <location>
        <position position="41"/>
    </location>
    <ligand>
        <name>Zn(2+)</name>
        <dbReference type="ChEBI" id="CHEBI:29105"/>
        <label>1</label>
    </ligand>
</feature>
<feature type="binding site" evidence="1">
    <location>
        <position position="105"/>
    </location>
    <ligand>
        <name>Zn(2+)</name>
        <dbReference type="ChEBI" id="CHEBI:29105"/>
        <label>2</label>
    </ligand>
</feature>
<feature type="binding site" evidence="1">
    <location>
        <position position="108"/>
    </location>
    <ligand>
        <name>Zn(2+)</name>
        <dbReference type="ChEBI" id="CHEBI:29105"/>
        <label>2</label>
    </ligand>
</feature>
<feature type="binding site" evidence="1">
    <location>
        <position position="119"/>
    </location>
    <ligand>
        <name>Zn(2+)</name>
        <dbReference type="ChEBI" id="CHEBI:29105"/>
        <label>3</label>
    </ligand>
</feature>
<feature type="binding site" evidence="1">
    <location>
        <position position="121"/>
    </location>
    <ligand>
        <name>Zn(2+)</name>
        <dbReference type="ChEBI" id="CHEBI:29105"/>
        <label>3</label>
    </ligand>
</feature>
<feature type="binding site" evidence="1">
    <location>
        <position position="126"/>
    </location>
    <ligand>
        <name>Zn(2+)</name>
        <dbReference type="ChEBI" id="CHEBI:29105"/>
        <label>2</label>
    </ligand>
</feature>
<feature type="binding site" evidence="1">
    <location>
        <position position="129"/>
    </location>
    <ligand>
        <name>Zn(2+)</name>
        <dbReference type="ChEBI" id="CHEBI:29105"/>
        <label>2</label>
    </ligand>
</feature>
<feature type="binding site" evidence="1">
    <location>
        <position position="135"/>
    </location>
    <ligand>
        <name>Zn(2+)</name>
        <dbReference type="ChEBI" id="CHEBI:29105"/>
        <label>3</label>
    </ligand>
</feature>
<feature type="binding site" evidence="1">
    <location>
        <position position="137"/>
    </location>
    <ligand>
        <name>Zn(2+)</name>
        <dbReference type="ChEBI" id="CHEBI:29105"/>
        <label>3</label>
    </ligand>
</feature>
<feature type="splice variant" id="VSP_022107" description="In isoform 2." evidence="4">
    <location>
        <begin position="48"/>
        <end position="146"/>
    </location>
</feature>
<feature type="sequence conflict" description="In Ref. 4; EAZ45178." evidence="4" ref="4">
    <original>S</original>
    <variation>F</variation>
    <location>
        <position position="48"/>
    </location>
</feature>
<dbReference type="EMBL" id="AP008215">
    <property type="protein sequence ID" value="BAF25435.1"/>
    <property type="molecule type" value="Genomic_DNA"/>
</dbReference>
<dbReference type="EMBL" id="AP014965">
    <property type="protein sequence ID" value="BAT08704.1"/>
    <property type="molecule type" value="Genomic_DNA"/>
</dbReference>
<dbReference type="EMBL" id="CM000146">
    <property type="protein sequence ID" value="EAZ45178.1"/>
    <property type="molecule type" value="Genomic_DNA"/>
</dbReference>
<dbReference type="EMBL" id="AK061067">
    <property type="protein sequence ID" value="BAG87708.1"/>
    <property type="molecule type" value="mRNA"/>
</dbReference>
<dbReference type="EMBL" id="AK070140">
    <property type="protein sequence ID" value="BAG91792.1"/>
    <property type="molecule type" value="mRNA"/>
</dbReference>
<dbReference type="EMBL" id="AK106128">
    <property type="protein sequence ID" value="BAG97589.1"/>
    <property type="molecule type" value="mRNA"/>
</dbReference>
<dbReference type="EMBL" id="AK119793">
    <property type="protein sequence ID" value="BAG99795.1"/>
    <property type="molecule type" value="mRNA"/>
</dbReference>
<dbReference type="RefSeq" id="XP_015651267.1">
    <property type="nucleotide sequence ID" value="XM_015795781.1"/>
</dbReference>
<dbReference type="SMR" id="A3C039"/>
<dbReference type="FunCoup" id="A3C039">
    <property type="interactions" value="136"/>
</dbReference>
<dbReference type="STRING" id="39947.A3C039"/>
<dbReference type="PaxDb" id="39947-A3C039"/>
<dbReference type="EnsemblPlants" id="Os09t0486500-02">
    <molecule id="A3C039-1"/>
    <property type="protein sequence ID" value="Os09t0486500-02"/>
    <property type="gene ID" value="Os09g0486500"/>
</dbReference>
<dbReference type="Gramene" id="Os09t0486500-02">
    <molecule id="A3C039-1"/>
    <property type="protein sequence ID" value="Os09t0486500-02"/>
    <property type="gene ID" value="Os09g0486500"/>
</dbReference>
<dbReference type="KEGG" id="dosa:Os09g0486500"/>
<dbReference type="eggNOG" id="KOG3173">
    <property type="taxonomic scope" value="Eukaryota"/>
</dbReference>
<dbReference type="HOGENOM" id="CLU_057016_5_3_1"/>
<dbReference type="InParanoid" id="A3C039"/>
<dbReference type="OMA" id="CFNATTT"/>
<dbReference type="OrthoDB" id="428577at2759"/>
<dbReference type="PlantReactome" id="R-OSA-9826782">
    <property type="pathway name" value="Regulation of seed germination and coleoptile growth under submergence and normal gravity environment"/>
</dbReference>
<dbReference type="Proteomes" id="UP000000763">
    <property type="component" value="Chromosome 9"/>
</dbReference>
<dbReference type="Proteomes" id="UP000007752">
    <property type="component" value="Chromosome 9"/>
</dbReference>
<dbReference type="Proteomes" id="UP000059680">
    <property type="component" value="Chromosome 9"/>
</dbReference>
<dbReference type="GO" id="GO:0003677">
    <property type="term" value="F:DNA binding"/>
    <property type="evidence" value="ECO:0007669"/>
    <property type="project" value="InterPro"/>
</dbReference>
<dbReference type="GO" id="GO:0004842">
    <property type="term" value="F:ubiquitin-protein transferase activity"/>
    <property type="evidence" value="ECO:0000318"/>
    <property type="project" value="GO_Central"/>
</dbReference>
<dbReference type="GO" id="GO:0008270">
    <property type="term" value="F:zinc ion binding"/>
    <property type="evidence" value="ECO:0007669"/>
    <property type="project" value="UniProtKB-KW"/>
</dbReference>
<dbReference type="GO" id="GO:0016567">
    <property type="term" value="P:protein ubiquitination"/>
    <property type="evidence" value="ECO:0000318"/>
    <property type="project" value="GO_Central"/>
</dbReference>
<dbReference type="FunFam" id="1.20.5.4770:FF:000006">
    <property type="entry name" value="Zinc finger A20 and AN1 domain-containing stress-associated protein 1"/>
    <property type="match status" value="1"/>
</dbReference>
<dbReference type="FunFam" id="4.10.1110.10:FF:000001">
    <property type="entry name" value="Zinc finger AN1-type containing 6"/>
    <property type="match status" value="1"/>
</dbReference>
<dbReference type="Gene3D" id="1.20.5.4770">
    <property type="match status" value="1"/>
</dbReference>
<dbReference type="Gene3D" id="4.10.1110.10">
    <property type="entry name" value="AN1-like Zinc finger"/>
    <property type="match status" value="1"/>
</dbReference>
<dbReference type="InterPro" id="IPR035896">
    <property type="entry name" value="AN1-like_Znf"/>
</dbReference>
<dbReference type="InterPro" id="IPR050652">
    <property type="entry name" value="AN1_A20_ZnFinger"/>
</dbReference>
<dbReference type="InterPro" id="IPR002653">
    <property type="entry name" value="Znf_A20"/>
</dbReference>
<dbReference type="InterPro" id="IPR000058">
    <property type="entry name" value="Znf_AN1"/>
</dbReference>
<dbReference type="PANTHER" id="PTHR10634">
    <property type="entry name" value="AN1-TYPE ZINC FINGER PROTEIN"/>
    <property type="match status" value="1"/>
</dbReference>
<dbReference type="PANTHER" id="PTHR10634:SF22">
    <property type="entry name" value="ZINC FINGER A20 AND AN1 DOMAIN-CONTAINING STRESS-ASSOCIATED PROTEIN 5"/>
    <property type="match status" value="1"/>
</dbReference>
<dbReference type="Pfam" id="PF01754">
    <property type="entry name" value="zf-A20"/>
    <property type="match status" value="1"/>
</dbReference>
<dbReference type="Pfam" id="PF01428">
    <property type="entry name" value="zf-AN1"/>
    <property type="match status" value="1"/>
</dbReference>
<dbReference type="SMART" id="SM00259">
    <property type="entry name" value="ZnF_A20"/>
    <property type="match status" value="1"/>
</dbReference>
<dbReference type="SMART" id="SM00154">
    <property type="entry name" value="ZnF_AN1"/>
    <property type="match status" value="1"/>
</dbReference>
<dbReference type="SUPFAM" id="SSF118310">
    <property type="entry name" value="AN1-like Zinc finger"/>
    <property type="match status" value="1"/>
</dbReference>
<dbReference type="SUPFAM" id="SSF57716">
    <property type="entry name" value="Glucocorticoid receptor-like (DNA-binding domain)"/>
    <property type="match status" value="1"/>
</dbReference>
<dbReference type="PROSITE" id="PS51036">
    <property type="entry name" value="ZF_A20"/>
    <property type="match status" value="1"/>
</dbReference>
<dbReference type="PROSITE" id="PS51039">
    <property type="entry name" value="ZF_AN1"/>
    <property type="match status" value="1"/>
</dbReference>
<gene>
    <name type="primary">SAP1</name>
    <name type="synonym">ISAP1</name>
    <name type="ordered locus">Os09g0486500</name>
    <name type="ordered locus">LOC_Os09g31200</name>
    <name type="ORF">OsJ_028661</name>
</gene>
<accession>A3C039</accession>
<accession>B7E5R1</accession>
<accession>Q0J0R7</accession>
<accession>Q9LLX1</accession>
<protein>
    <recommendedName>
        <fullName>Zinc finger A20 and AN1 domain-containing stress-associated protein 1</fullName>
        <shortName>OsSAP1</shortName>
    </recommendedName>
    <alternativeName>
        <fullName>Multiple stress-responsive zinc finger protein ISAP1</fullName>
        <shortName>OsiSAP1</shortName>
    </alternativeName>
</protein>
<comment type="function">
    <text>May be involved in environmental stress response.</text>
</comment>
<comment type="alternative products">
    <event type="alternative splicing"/>
    <isoform>
        <id>A3C039-1</id>
        <id>Q9LLX1-1</id>
        <name>1</name>
        <sequence type="displayed"/>
    </isoform>
    <isoform>
        <id>A3C039-2</id>
        <id>Q9LLX1-2</id>
        <name>2</name>
        <sequence type="described" ref="VSP_022107"/>
    </isoform>
</comment>
<keyword id="KW-0025">Alternative splicing</keyword>
<keyword id="KW-0479">Metal-binding</keyword>
<keyword id="KW-1185">Reference proteome</keyword>
<keyword id="KW-0346">Stress response</keyword>
<keyword id="KW-0862">Zinc</keyword>
<keyword id="KW-0863">Zinc-finger</keyword>
<name>SAP1_ORYSJ</name>
<organism>
    <name type="scientific">Oryza sativa subsp. japonica</name>
    <name type="common">Rice</name>
    <dbReference type="NCBI Taxonomy" id="39947"/>
    <lineage>
        <taxon>Eukaryota</taxon>
        <taxon>Viridiplantae</taxon>
        <taxon>Streptophyta</taxon>
        <taxon>Embryophyta</taxon>
        <taxon>Tracheophyta</taxon>
        <taxon>Spermatophyta</taxon>
        <taxon>Magnoliopsida</taxon>
        <taxon>Liliopsida</taxon>
        <taxon>Poales</taxon>
        <taxon>Poaceae</taxon>
        <taxon>BOP clade</taxon>
        <taxon>Oryzoideae</taxon>
        <taxon>Oryzeae</taxon>
        <taxon>Oryzinae</taxon>
        <taxon>Oryza</taxon>
        <taxon>Oryza sativa</taxon>
    </lineage>
</organism>
<evidence type="ECO:0000255" key="1">
    <source>
        <dbReference type="PROSITE-ProRule" id="PRU00449"/>
    </source>
</evidence>
<evidence type="ECO:0000255" key="2">
    <source>
        <dbReference type="PROSITE-ProRule" id="PRU00451"/>
    </source>
</evidence>
<evidence type="ECO:0000256" key="3">
    <source>
        <dbReference type="SAM" id="MobiDB-lite"/>
    </source>
</evidence>
<evidence type="ECO:0000305" key="4"/>
<sequence>MAQRDKKDQEPTELRAPEITLCANSCGFPGNPATQNLCQNCFLAATASTSSPSSLSSPVLDKQPPRPAAPLVEPQAPLPPPVEEMASALATAPAPVAKTSAVNRCSRCRKRVGLTGFRCRCGHLFCGEHRYSDRHGCSYDYKSAARDAIARDNPVVRAAKIVRF</sequence>
<proteinExistence type="evidence at transcript level"/>